<name>PROA_NOCSJ</name>
<dbReference type="EC" id="1.2.1.41" evidence="1"/>
<dbReference type="EMBL" id="CP000509">
    <property type="protein sequence ID" value="ABL81330.1"/>
    <property type="molecule type" value="Genomic_DNA"/>
</dbReference>
<dbReference type="RefSeq" id="WP_011755277.1">
    <property type="nucleotide sequence ID" value="NC_008699.1"/>
</dbReference>
<dbReference type="SMR" id="A1SHP5"/>
<dbReference type="STRING" id="196162.Noca_1818"/>
<dbReference type="KEGG" id="nca:Noca_1818"/>
<dbReference type="eggNOG" id="COG0014">
    <property type="taxonomic scope" value="Bacteria"/>
</dbReference>
<dbReference type="HOGENOM" id="CLU_030231_0_0_11"/>
<dbReference type="OrthoDB" id="9809970at2"/>
<dbReference type="UniPathway" id="UPA00098">
    <property type="reaction ID" value="UER00360"/>
</dbReference>
<dbReference type="Proteomes" id="UP000000640">
    <property type="component" value="Chromosome"/>
</dbReference>
<dbReference type="GO" id="GO:0005737">
    <property type="term" value="C:cytoplasm"/>
    <property type="evidence" value="ECO:0007669"/>
    <property type="project" value="UniProtKB-SubCell"/>
</dbReference>
<dbReference type="GO" id="GO:0004350">
    <property type="term" value="F:glutamate-5-semialdehyde dehydrogenase activity"/>
    <property type="evidence" value="ECO:0007669"/>
    <property type="project" value="UniProtKB-UniRule"/>
</dbReference>
<dbReference type="GO" id="GO:0050661">
    <property type="term" value="F:NADP binding"/>
    <property type="evidence" value="ECO:0007669"/>
    <property type="project" value="InterPro"/>
</dbReference>
<dbReference type="GO" id="GO:0055129">
    <property type="term" value="P:L-proline biosynthetic process"/>
    <property type="evidence" value="ECO:0007669"/>
    <property type="project" value="UniProtKB-UniRule"/>
</dbReference>
<dbReference type="CDD" id="cd07079">
    <property type="entry name" value="ALDH_F18-19_ProA-GPR"/>
    <property type="match status" value="1"/>
</dbReference>
<dbReference type="FunFam" id="3.40.309.10:FF:000006">
    <property type="entry name" value="Gamma-glutamyl phosphate reductase"/>
    <property type="match status" value="1"/>
</dbReference>
<dbReference type="Gene3D" id="3.40.605.10">
    <property type="entry name" value="Aldehyde Dehydrogenase, Chain A, domain 1"/>
    <property type="match status" value="1"/>
</dbReference>
<dbReference type="Gene3D" id="3.40.309.10">
    <property type="entry name" value="Aldehyde Dehydrogenase, Chain A, domain 2"/>
    <property type="match status" value="1"/>
</dbReference>
<dbReference type="HAMAP" id="MF_00412">
    <property type="entry name" value="ProA"/>
    <property type="match status" value="1"/>
</dbReference>
<dbReference type="InterPro" id="IPR016161">
    <property type="entry name" value="Ald_DH/histidinol_DH"/>
</dbReference>
<dbReference type="InterPro" id="IPR016163">
    <property type="entry name" value="Ald_DH_C"/>
</dbReference>
<dbReference type="InterPro" id="IPR016162">
    <property type="entry name" value="Ald_DH_N"/>
</dbReference>
<dbReference type="InterPro" id="IPR015590">
    <property type="entry name" value="Aldehyde_DH_dom"/>
</dbReference>
<dbReference type="InterPro" id="IPR020593">
    <property type="entry name" value="G-glutamylP_reductase_CS"/>
</dbReference>
<dbReference type="InterPro" id="IPR012134">
    <property type="entry name" value="Glu-5-SA_DH"/>
</dbReference>
<dbReference type="InterPro" id="IPR000965">
    <property type="entry name" value="GPR_dom"/>
</dbReference>
<dbReference type="NCBIfam" id="NF001221">
    <property type="entry name" value="PRK00197.1"/>
    <property type="match status" value="1"/>
</dbReference>
<dbReference type="NCBIfam" id="TIGR00407">
    <property type="entry name" value="proA"/>
    <property type="match status" value="1"/>
</dbReference>
<dbReference type="PANTHER" id="PTHR11063:SF8">
    <property type="entry name" value="DELTA-1-PYRROLINE-5-CARBOXYLATE SYNTHASE"/>
    <property type="match status" value="1"/>
</dbReference>
<dbReference type="PANTHER" id="PTHR11063">
    <property type="entry name" value="GLUTAMATE SEMIALDEHYDE DEHYDROGENASE"/>
    <property type="match status" value="1"/>
</dbReference>
<dbReference type="Pfam" id="PF00171">
    <property type="entry name" value="Aldedh"/>
    <property type="match status" value="1"/>
</dbReference>
<dbReference type="PIRSF" id="PIRSF000151">
    <property type="entry name" value="GPR"/>
    <property type="match status" value="1"/>
</dbReference>
<dbReference type="SUPFAM" id="SSF53720">
    <property type="entry name" value="ALDH-like"/>
    <property type="match status" value="1"/>
</dbReference>
<dbReference type="PROSITE" id="PS01223">
    <property type="entry name" value="PROA"/>
    <property type="match status" value="1"/>
</dbReference>
<keyword id="KW-0028">Amino-acid biosynthesis</keyword>
<keyword id="KW-0963">Cytoplasm</keyword>
<keyword id="KW-0521">NADP</keyword>
<keyword id="KW-0560">Oxidoreductase</keyword>
<keyword id="KW-0641">Proline biosynthesis</keyword>
<keyword id="KW-1185">Reference proteome</keyword>
<proteinExistence type="inferred from homology"/>
<accession>A1SHP5</accession>
<organism>
    <name type="scientific">Nocardioides sp. (strain ATCC BAA-499 / JS614)</name>
    <dbReference type="NCBI Taxonomy" id="196162"/>
    <lineage>
        <taxon>Bacteria</taxon>
        <taxon>Bacillati</taxon>
        <taxon>Actinomycetota</taxon>
        <taxon>Actinomycetes</taxon>
        <taxon>Propionibacteriales</taxon>
        <taxon>Nocardioidaceae</taxon>
        <taxon>Nocardioides</taxon>
    </lineage>
</organism>
<gene>
    <name evidence="1" type="primary">proA</name>
    <name type="ordered locus">Noca_1818</name>
</gene>
<comment type="function">
    <text evidence="1">Catalyzes the NADPH-dependent reduction of L-glutamate 5-phosphate into L-glutamate 5-semialdehyde and phosphate. The product spontaneously undergoes cyclization to form 1-pyrroline-5-carboxylate.</text>
</comment>
<comment type="catalytic activity">
    <reaction evidence="1">
        <text>L-glutamate 5-semialdehyde + phosphate + NADP(+) = L-glutamyl 5-phosphate + NADPH + H(+)</text>
        <dbReference type="Rhea" id="RHEA:19541"/>
        <dbReference type="ChEBI" id="CHEBI:15378"/>
        <dbReference type="ChEBI" id="CHEBI:43474"/>
        <dbReference type="ChEBI" id="CHEBI:57783"/>
        <dbReference type="ChEBI" id="CHEBI:58066"/>
        <dbReference type="ChEBI" id="CHEBI:58274"/>
        <dbReference type="ChEBI" id="CHEBI:58349"/>
        <dbReference type="EC" id="1.2.1.41"/>
    </reaction>
</comment>
<comment type="pathway">
    <text evidence="1">Amino-acid biosynthesis; L-proline biosynthesis; L-glutamate 5-semialdehyde from L-glutamate: step 2/2.</text>
</comment>
<comment type="subcellular location">
    <subcellularLocation>
        <location evidence="1">Cytoplasm</location>
    </subcellularLocation>
</comment>
<comment type="similarity">
    <text evidence="1">Belongs to the gamma-glutamyl phosphate reductase family.</text>
</comment>
<evidence type="ECO:0000255" key="1">
    <source>
        <dbReference type="HAMAP-Rule" id="MF_00412"/>
    </source>
</evidence>
<sequence>MSTQHDEHDAAGATGVADQVVAAAERARAASHGLALATRAEKDAALQAMAEALLTREPEVLAANGEDVARAEANGTPPNIVDRLRLTQERVAAMAQGLRDVAALPDPVGEVLRGSTLANGLEMRQVRVPFGVVGMIYEARPNVTADAAGICLKSGNAVLLRGSSSARSSNAAIVAALRDAIAGTGLDPDVVQQVPGDSHDSVKALMRARGHVDVLIPRGGAGLIRSVVEESTVPVIETGVGNCHVYVDRAADLDKALAIVLNAKTHRTSVCNAAESLLVHADLADTFVPRVVAALQEAGVTVHGDERFQAEDGVLPATDEDYGQEYLSLDISAAVVPDLDGAIAHIRRWSSQHTEAIVTEDLAAARRFTAAVDSAAVLVNASTRFTDGGEFGFGAEIGISTQKLHARGPMGLTEMTSTKYVVTGDGHVR</sequence>
<feature type="chain" id="PRO_0000340898" description="Gamma-glutamyl phosphate reductase">
    <location>
        <begin position="1"/>
        <end position="429"/>
    </location>
</feature>
<reference key="1">
    <citation type="submission" date="2006-12" db="EMBL/GenBank/DDBJ databases">
        <title>Complete sequence of chromosome 1 of Nocardioides sp. JS614.</title>
        <authorList>
            <person name="Copeland A."/>
            <person name="Lucas S."/>
            <person name="Lapidus A."/>
            <person name="Barry K."/>
            <person name="Detter J.C."/>
            <person name="Glavina del Rio T."/>
            <person name="Hammon N."/>
            <person name="Israni S."/>
            <person name="Dalin E."/>
            <person name="Tice H."/>
            <person name="Pitluck S."/>
            <person name="Thompson L.S."/>
            <person name="Brettin T."/>
            <person name="Bruce D."/>
            <person name="Han C."/>
            <person name="Tapia R."/>
            <person name="Schmutz J."/>
            <person name="Larimer F."/>
            <person name="Land M."/>
            <person name="Hauser L."/>
            <person name="Kyrpides N."/>
            <person name="Kim E."/>
            <person name="Mattes T."/>
            <person name="Gossett J."/>
            <person name="Richardson P."/>
        </authorList>
    </citation>
    <scope>NUCLEOTIDE SEQUENCE [LARGE SCALE GENOMIC DNA]</scope>
    <source>
        <strain>ATCC BAA-499 / JS614</strain>
    </source>
</reference>
<protein>
    <recommendedName>
        <fullName evidence="1">Gamma-glutamyl phosphate reductase</fullName>
        <shortName evidence="1">GPR</shortName>
        <ecNumber evidence="1">1.2.1.41</ecNumber>
    </recommendedName>
    <alternativeName>
        <fullName evidence="1">Glutamate-5-semialdehyde dehydrogenase</fullName>
    </alternativeName>
    <alternativeName>
        <fullName evidence="1">Glutamyl-gamma-semialdehyde dehydrogenase</fullName>
        <shortName evidence="1">GSA dehydrogenase</shortName>
    </alternativeName>
</protein>